<gene>
    <name evidence="1" type="primary">argS</name>
    <name type="ordered locus">VFMJ11_0877</name>
</gene>
<sequence length="577" mass="64080">MNIQSLINDKVSQALEAAGAPAGSPAAVRQSAKAQFGDYQANGVMGVAKRLGTNPREFAQKVLDVLDLDGIASKTEIAGPGFINIFLSEEFLAKQAEAALADKRLGVAKEEQQNIVADYSAPNVAKEMHVGHLRSTIIGDAVVRTLEFLGHNVTRANHIGDWGTQFGMLIANLERIQKEKGEVSMELSDLEGFYRESKKLYDEDEEFAVTARGYVVKLQSGDEFCAEMWKKLVDVTMVQNQRNYDRLNVSLTRDNVMGESMYNSMLAPIVADLQKQGLAVESEGAQVVFLDEYKNKDGEPMGVIVQKRDGGFLYTTTDIACAKYRYEELNADRVLYFIDSRQHQHLMQAWTIVRKAGYVPESVSLEHHAFGMMLGKDGRPFKTRAGGTVRLADLLDEAEERAAKLIEEKNKDLPAEEKAKIATTVAMAAVKYSDLSKHRTTDYIFDWDNMLAFEGNTAPYMQYAYTRVASIFSKAGLSMDELTGEVKITDEKEKALVAKLMQFEEAVQAVASEGQPHLMCAYLFELAGQFSSFYEACPILNNEDDAVKQSRLKLAALTAKTIKQGLELLGIETLERM</sequence>
<name>SYR_ALIFM</name>
<protein>
    <recommendedName>
        <fullName evidence="1">Arginine--tRNA ligase</fullName>
        <ecNumber evidence="1">6.1.1.19</ecNumber>
    </recommendedName>
    <alternativeName>
        <fullName evidence="1">Arginyl-tRNA synthetase</fullName>
        <shortName evidence="1">ArgRS</shortName>
    </alternativeName>
</protein>
<keyword id="KW-0030">Aminoacyl-tRNA synthetase</keyword>
<keyword id="KW-0067">ATP-binding</keyword>
<keyword id="KW-0963">Cytoplasm</keyword>
<keyword id="KW-0436">Ligase</keyword>
<keyword id="KW-0547">Nucleotide-binding</keyword>
<keyword id="KW-0648">Protein biosynthesis</keyword>
<organism>
    <name type="scientific">Aliivibrio fischeri (strain MJ11)</name>
    <name type="common">Vibrio fischeri</name>
    <dbReference type="NCBI Taxonomy" id="388396"/>
    <lineage>
        <taxon>Bacteria</taxon>
        <taxon>Pseudomonadati</taxon>
        <taxon>Pseudomonadota</taxon>
        <taxon>Gammaproteobacteria</taxon>
        <taxon>Vibrionales</taxon>
        <taxon>Vibrionaceae</taxon>
        <taxon>Aliivibrio</taxon>
    </lineage>
</organism>
<accession>B5FC42</accession>
<evidence type="ECO:0000255" key="1">
    <source>
        <dbReference type="HAMAP-Rule" id="MF_00123"/>
    </source>
</evidence>
<feature type="chain" id="PRO_1000095418" description="Arginine--tRNA ligase">
    <location>
        <begin position="1"/>
        <end position="577"/>
    </location>
</feature>
<feature type="short sequence motif" description="'HIGH' region">
    <location>
        <begin position="122"/>
        <end position="132"/>
    </location>
</feature>
<dbReference type="EC" id="6.1.1.19" evidence="1"/>
<dbReference type="EMBL" id="CP001139">
    <property type="protein sequence ID" value="ACH65193.1"/>
    <property type="molecule type" value="Genomic_DNA"/>
</dbReference>
<dbReference type="RefSeq" id="WP_012532885.1">
    <property type="nucleotide sequence ID" value="NC_011184.1"/>
</dbReference>
<dbReference type="SMR" id="B5FC42"/>
<dbReference type="KEGG" id="vfm:VFMJ11_0877"/>
<dbReference type="HOGENOM" id="CLU_006406_5_1_6"/>
<dbReference type="Proteomes" id="UP000001857">
    <property type="component" value="Chromosome I"/>
</dbReference>
<dbReference type="GO" id="GO:0005737">
    <property type="term" value="C:cytoplasm"/>
    <property type="evidence" value="ECO:0007669"/>
    <property type="project" value="UniProtKB-SubCell"/>
</dbReference>
<dbReference type="GO" id="GO:0004814">
    <property type="term" value="F:arginine-tRNA ligase activity"/>
    <property type="evidence" value="ECO:0007669"/>
    <property type="project" value="UniProtKB-UniRule"/>
</dbReference>
<dbReference type="GO" id="GO:0005524">
    <property type="term" value="F:ATP binding"/>
    <property type="evidence" value="ECO:0007669"/>
    <property type="project" value="UniProtKB-UniRule"/>
</dbReference>
<dbReference type="GO" id="GO:0006420">
    <property type="term" value="P:arginyl-tRNA aminoacylation"/>
    <property type="evidence" value="ECO:0007669"/>
    <property type="project" value="UniProtKB-UniRule"/>
</dbReference>
<dbReference type="CDD" id="cd07956">
    <property type="entry name" value="Anticodon_Ia_Arg"/>
    <property type="match status" value="1"/>
</dbReference>
<dbReference type="CDD" id="cd00671">
    <property type="entry name" value="ArgRS_core"/>
    <property type="match status" value="1"/>
</dbReference>
<dbReference type="FunFam" id="1.10.730.10:FF:000001">
    <property type="entry name" value="Arginine--tRNA ligase"/>
    <property type="match status" value="1"/>
</dbReference>
<dbReference type="FunFam" id="3.40.50.620:FF:000030">
    <property type="entry name" value="Arginine--tRNA ligase"/>
    <property type="match status" value="1"/>
</dbReference>
<dbReference type="Gene3D" id="3.30.1360.70">
    <property type="entry name" value="Arginyl tRNA synthetase N-terminal domain"/>
    <property type="match status" value="1"/>
</dbReference>
<dbReference type="Gene3D" id="3.40.50.620">
    <property type="entry name" value="HUPs"/>
    <property type="match status" value="1"/>
</dbReference>
<dbReference type="Gene3D" id="1.10.730.10">
    <property type="entry name" value="Isoleucyl-tRNA Synthetase, Domain 1"/>
    <property type="match status" value="1"/>
</dbReference>
<dbReference type="HAMAP" id="MF_00123">
    <property type="entry name" value="Arg_tRNA_synth"/>
    <property type="match status" value="1"/>
</dbReference>
<dbReference type="InterPro" id="IPR001412">
    <property type="entry name" value="aa-tRNA-synth_I_CS"/>
</dbReference>
<dbReference type="InterPro" id="IPR001278">
    <property type="entry name" value="Arg-tRNA-ligase"/>
</dbReference>
<dbReference type="InterPro" id="IPR005148">
    <property type="entry name" value="Arg-tRNA-synth_N"/>
</dbReference>
<dbReference type="InterPro" id="IPR036695">
    <property type="entry name" value="Arg-tRNA-synth_N_sf"/>
</dbReference>
<dbReference type="InterPro" id="IPR035684">
    <property type="entry name" value="ArgRS_core"/>
</dbReference>
<dbReference type="InterPro" id="IPR008909">
    <property type="entry name" value="DALR_anticod-bd"/>
</dbReference>
<dbReference type="InterPro" id="IPR014729">
    <property type="entry name" value="Rossmann-like_a/b/a_fold"/>
</dbReference>
<dbReference type="InterPro" id="IPR009080">
    <property type="entry name" value="tRNAsynth_Ia_anticodon-bd"/>
</dbReference>
<dbReference type="NCBIfam" id="TIGR00456">
    <property type="entry name" value="argS"/>
    <property type="match status" value="1"/>
</dbReference>
<dbReference type="PANTHER" id="PTHR11956:SF5">
    <property type="entry name" value="ARGININE--TRNA LIGASE, CYTOPLASMIC"/>
    <property type="match status" value="1"/>
</dbReference>
<dbReference type="PANTHER" id="PTHR11956">
    <property type="entry name" value="ARGINYL-TRNA SYNTHETASE"/>
    <property type="match status" value="1"/>
</dbReference>
<dbReference type="Pfam" id="PF03485">
    <property type="entry name" value="Arg_tRNA_synt_N"/>
    <property type="match status" value="1"/>
</dbReference>
<dbReference type="Pfam" id="PF05746">
    <property type="entry name" value="DALR_1"/>
    <property type="match status" value="1"/>
</dbReference>
<dbReference type="Pfam" id="PF00750">
    <property type="entry name" value="tRNA-synt_1d"/>
    <property type="match status" value="1"/>
</dbReference>
<dbReference type="PRINTS" id="PR01038">
    <property type="entry name" value="TRNASYNTHARG"/>
</dbReference>
<dbReference type="SMART" id="SM01016">
    <property type="entry name" value="Arg_tRNA_synt_N"/>
    <property type="match status" value="1"/>
</dbReference>
<dbReference type="SMART" id="SM00836">
    <property type="entry name" value="DALR_1"/>
    <property type="match status" value="1"/>
</dbReference>
<dbReference type="SUPFAM" id="SSF47323">
    <property type="entry name" value="Anticodon-binding domain of a subclass of class I aminoacyl-tRNA synthetases"/>
    <property type="match status" value="1"/>
</dbReference>
<dbReference type="SUPFAM" id="SSF55190">
    <property type="entry name" value="Arginyl-tRNA synthetase (ArgRS), N-terminal 'additional' domain"/>
    <property type="match status" value="1"/>
</dbReference>
<dbReference type="SUPFAM" id="SSF52374">
    <property type="entry name" value="Nucleotidylyl transferase"/>
    <property type="match status" value="1"/>
</dbReference>
<dbReference type="PROSITE" id="PS00178">
    <property type="entry name" value="AA_TRNA_LIGASE_I"/>
    <property type="match status" value="1"/>
</dbReference>
<comment type="catalytic activity">
    <reaction evidence="1">
        <text>tRNA(Arg) + L-arginine + ATP = L-arginyl-tRNA(Arg) + AMP + diphosphate</text>
        <dbReference type="Rhea" id="RHEA:20301"/>
        <dbReference type="Rhea" id="RHEA-COMP:9658"/>
        <dbReference type="Rhea" id="RHEA-COMP:9673"/>
        <dbReference type="ChEBI" id="CHEBI:30616"/>
        <dbReference type="ChEBI" id="CHEBI:32682"/>
        <dbReference type="ChEBI" id="CHEBI:33019"/>
        <dbReference type="ChEBI" id="CHEBI:78442"/>
        <dbReference type="ChEBI" id="CHEBI:78513"/>
        <dbReference type="ChEBI" id="CHEBI:456215"/>
        <dbReference type="EC" id="6.1.1.19"/>
    </reaction>
</comment>
<comment type="subunit">
    <text evidence="1">Monomer.</text>
</comment>
<comment type="subcellular location">
    <subcellularLocation>
        <location evidence="1">Cytoplasm</location>
    </subcellularLocation>
</comment>
<comment type="similarity">
    <text evidence="1">Belongs to the class-I aminoacyl-tRNA synthetase family.</text>
</comment>
<reference key="1">
    <citation type="submission" date="2008-08" db="EMBL/GenBank/DDBJ databases">
        <title>Complete sequence of Vibrio fischeri strain MJ11.</title>
        <authorList>
            <person name="Mandel M.J."/>
            <person name="Stabb E.V."/>
            <person name="Ruby E.G."/>
            <person name="Ferriera S."/>
            <person name="Johnson J."/>
            <person name="Kravitz S."/>
            <person name="Beeson K."/>
            <person name="Sutton G."/>
            <person name="Rogers Y.-H."/>
            <person name="Friedman R."/>
            <person name="Frazier M."/>
            <person name="Venter J.C."/>
        </authorList>
    </citation>
    <scope>NUCLEOTIDE SEQUENCE [LARGE SCALE GENOMIC DNA]</scope>
    <source>
        <strain>MJ11</strain>
    </source>
</reference>
<proteinExistence type="inferred from homology"/>